<protein>
    <recommendedName>
        <fullName evidence="1">Phosphoenolpyruvate carboxykinase [GTP]</fullName>
        <shortName evidence="1">PEP carboxykinase</shortName>
        <shortName evidence="1">PEPCK</shortName>
        <ecNumber evidence="1">4.1.1.32</ecNumber>
    </recommendedName>
</protein>
<keyword id="KW-0963">Cytoplasm</keyword>
<keyword id="KW-0210">Decarboxylase</keyword>
<keyword id="KW-0312">Gluconeogenesis</keyword>
<keyword id="KW-0342">GTP-binding</keyword>
<keyword id="KW-0456">Lyase</keyword>
<keyword id="KW-0464">Manganese</keyword>
<keyword id="KW-0479">Metal-binding</keyword>
<keyword id="KW-0547">Nucleotide-binding</keyword>
<evidence type="ECO:0000255" key="1">
    <source>
        <dbReference type="HAMAP-Rule" id="MF_00452"/>
    </source>
</evidence>
<evidence type="ECO:0000305" key="2"/>
<sequence length="618" mass="69531">MEPIPINAPDYVKNLKLLQWVKETVALCQPDSVCWCDGSTEEYDRLCEEMVNSGTFIKLSEQKRPNSYLCRSDPSDVARVEDRTFICSIRRQDAGPTNNWVAPKEMKATLNKLFTGCMKGRTMYVIPFSMGPLGSHIAHIGVEITDSPYVVTNMRIMTRMGRQVLELLDEEAEFVPCLHSVGAPLEPGQADVPWPCNDTKYIVHFPEEHAIVSYSSGYNGNTLLGKKCFALRIASSMARDEGWLAEHMLILGVESPAGEKDYVAAAFPSACGKTNFAMIIPPGEMEGWKITTVGDDIRLDQQGKDGRLHAINPEYGFFGVAPGTSDKSNPNAMATLHANCIFTNVALTPDGDVWWEDMTDTPPEYLIDWQGKPWVPGCDRPAAHPNSRFTAPASQCPVIDPAWENPRVLPISAFIFAGRRGDTIPLVYQSSNWYYGVYMAATMGSEKTAAAARSATCVDPFAMLPFCGYHMGDYFNHWLHVGRTVSDPPRIFIVNWFRKTRTGKFLWPGFGDNMRVLKWMMGRVHGRSGAVESPLGWMPRYESLDWRGLDGFTSNKFSKLMSVDREGKQELFSHEELLEKLYDRLPKEFTHIRELLLSTLWMSPEHWELAPELYSAES</sequence>
<accession>Q08262</accession>
<dbReference type="EC" id="4.1.1.32" evidence="1"/>
<dbReference type="EMBL" id="S56812">
    <property type="protein sequence ID" value="AAB25776.1"/>
    <property type="status" value="ALT_INIT"/>
    <property type="molecule type" value="Genomic_DNA"/>
</dbReference>
<dbReference type="SMR" id="Q08262"/>
<dbReference type="UniPathway" id="UPA00138"/>
<dbReference type="GO" id="GO:0005829">
    <property type="term" value="C:cytosol"/>
    <property type="evidence" value="ECO:0007669"/>
    <property type="project" value="TreeGrafter"/>
</dbReference>
<dbReference type="GO" id="GO:0005525">
    <property type="term" value="F:GTP binding"/>
    <property type="evidence" value="ECO:0007669"/>
    <property type="project" value="UniProtKB-UniRule"/>
</dbReference>
<dbReference type="GO" id="GO:0030145">
    <property type="term" value="F:manganese ion binding"/>
    <property type="evidence" value="ECO:0007669"/>
    <property type="project" value="UniProtKB-UniRule"/>
</dbReference>
<dbReference type="GO" id="GO:0004613">
    <property type="term" value="F:phosphoenolpyruvate carboxykinase (GTP) activity"/>
    <property type="evidence" value="ECO:0007669"/>
    <property type="project" value="UniProtKB-UniRule"/>
</dbReference>
<dbReference type="GO" id="GO:0071333">
    <property type="term" value="P:cellular response to glucose stimulus"/>
    <property type="evidence" value="ECO:0007669"/>
    <property type="project" value="TreeGrafter"/>
</dbReference>
<dbReference type="GO" id="GO:0006094">
    <property type="term" value="P:gluconeogenesis"/>
    <property type="evidence" value="ECO:0007669"/>
    <property type="project" value="UniProtKB-UniRule"/>
</dbReference>
<dbReference type="GO" id="GO:0046327">
    <property type="term" value="P:glycerol biosynthetic process from pyruvate"/>
    <property type="evidence" value="ECO:0007669"/>
    <property type="project" value="TreeGrafter"/>
</dbReference>
<dbReference type="GO" id="GO:0006107">
    <property type="term" value="P:oxaloacetate metabolic process"/>
    <property type="evidence" value="ECO:0007669"/>
    <property type="project" value="TreeGrafter"/>
</dbReference>
<dbReference type="GO" id="GO:0019543">
    <property type="term" value="P:propionate catabolic process"/>
    <property type="evidence" value="ECO:0007669"/>
    <property type="project" value="TreeGrafter"/>
</dbReference>
<dbReference type="GO" id="GO:0033993">
    <property type="term" value="P:response to lipid"/>
    <property type="evidence" value="ECO:0007669"/>
    <property type="project" value="TreeGrafter"/>
</dbReference>
<dbReference type="GO" id="GO:0042594">
    <property type="term" value="P:response to starvation"/>
    <property type="evidence" value="ECO:0007669"/>
    <property type="project" value="TreeGrafter"/>
</dbReference>
<dbReference type="CDD" id="cd00819">
    <property type="entry name" value="PEPCK_GTP"/>
    <property type="match status" value="1"/>
</dbReference>
<dbReference type="FunFam" id="3.40.449.10:FF:000005">
    <property type="entry name" value="Phosphoenolpyruvate carboxykinase [GTP]"/>
    <property type="match status" value="1"/>
</dbReference>
<dbReference type="Gene3D" id="3.90.228.20">
    <property type="match status" value="1"/>
</dbReference>
<dbReference type="Gene3D" id="3.40.449.10">
    <property type="entry name" value="Phosphoenolpyruvate Carboxykinase, domain 1"/>
    <property type="match status" value="1"/>
</dbReference>
<dbReference type="Gene3D" id="2.170.8.10">
    <property type="entry name" value="Phosphoenolpyruvate Carboxykinase, domain 2"/>
    <property type="match status" value="1"/>
</dbReference>
<dbReference type="HAMAP" id="MF_00452">
    <property type="entry name" value="PEPCK_GTP"/>
    <property type="match status" value="1"/>
</dbReference>
<dbReference type="InterPro" id="IPR018091">
    <property type="entry name" value="PEP_carboxykin_GTP_CS"/>
</dbReference>
<dbReference type="InterPro" id="IPR013035">
    <property type="entry name" value="PEP_carboxykinase_C"/>
</dbReference>
<dbReference type="InterPro" id="IPR008209">
    <property type="entry name" value="PEP_carboxykinase_GTP"/>
</dbReference>
<dbReference type="InterPro" id="IPR035077">
    <property type="entry name" value="PEP_carboxykinase_GTP_C"/>
</dbReference>
<dbReference type="InterPro" id="IPR035078">
    <property type="entry name" value="PEP_carboxykinase_GTP_N"/>
</dbReference>
<dbReference type="InterPro" id="IPR008210">
    <property type="entry name" value="PEP_carboxykinase_N"/>
</dbReference>
<dbReference type="NCBIfam" id="NF003253">
    <property type="entry name" value="PRK04210.1"/>
    <property type="match status" value="1"/>
</dbReference>
<dbReference type="PANTHER" id="PTHR11561">
    <property type="entry name" value="PHOSPHOENOLPYRUVATE CARBOXYKINASE"/>
    <property type="match status" value="1"/>
</dbReference>
<dbReference type="PANTHER" id="PTHR11561:SF0">
    <property type="entry name" value="PHOSPHOENOLPYRUVATE CARBOXYKINASE [GTP]-RELATED"/>
    <property type="match status" value="1"/>
</dbReference>
<dbReference type="Pfam" id="PF00821">
    <property type="entry name" value="PEPCK_GTP"/>
    <property type="match status" value="1"/>
</dbReference>
<dbReference type="Pfam" id="PF17297">
    <property type="entry name" value="PEPCK_N"/>
    <property type="match status" value="1"/>
</dbReference>
<dbReference type="PIRSF" id="PIRSF001348">
    <property type="entry name" value="PEP_carboxykinase_GTP"/>
    <property type="match status" value="1"/>
</dbReference>
<dbReference type="SUPFAM" id="SSF68923">
    <property type="entry name" value="PEP carboxykinase N-terminal domain"/>
    <property type="match status" value="1"/>
</dbReference>
<dbReference type="SUPFAM" id="SSF53795">
    <property type="entry name" value="PEP carboxykinase-like"/>
    <property type="match status" value="1"/>
</dbReference>
<dbReference type="PROSITE" id="PS00505">
    <property type="entry name" value="PEPCK_GTP"/>
    <property type="match status" value="1"/>
</dbReference>
<comment type="function">
    <text evidence="1">Catalyzes the conversion of oxaloacetate (OAA) to phosphoenolpyruvate (PEP), the rate-limiting step in the metabolic pathway that produces glucose from lactate and other precursors derived from the citric acid cycle.</text>
</comment>
<comment type="catalytic activity">
    <reaction evidence="1">
        <text>oxaloacetate + GTP = phosphoenolpyruvate + GDP + CO2</text>
        <dbReference type="Rhea" id="RHEA:10388"/>
        <dbReference type="ChEBI" id="CHEBI:16452"/>
        <dbReference type="ChEBI" id="CHEBI:16526"/>
        <dbReference type="ChEBI" id="CHEBI:37565"/>
        <dbReference type="ChEBI" id="CHEBI:58189"/>
        <dbReference type="ChEBI" id="CHEBI:58702"/>
        <dbReference type="EC" id="4.1.1.32"/>
    </reaction>
</comment>
<comment type="cofactor">
    <cofactor evidence="1">
        <name>Mn(2+)</name>
        <dbReference type="ChEBI" id="CHEBI:29035"/>
    </cofactor>
    <text evidence="1">Binds 1 Mn(2+) ion per subunit.</text>
</comment>
<comment type="pathway">
    <text evidence="1">Carbohydrate biosynthesis; gluconeogenesis.</text>
</comment>
<comment type="subunit">
    <text evidence="1">Monomer.</text>
</comment>
<comment type="subcellular location">
    <subcellularLocation>
        <location evidence="1">Cytoplasm</location>
    </subcellularLocation>
</comment>
<comment type="similarity">
    <text evidence="1">Belongs to the phosphoenolpyruvate carboxykinase [GTP] family.</text>
</comment>
<comment type="sequence caution" evidence="2">
    <conflict type="erroneous initiation">
        <sequence resource="EMBL-CDS" id="AAB25776"/>
    </conflict>
    <text>Extended N-terminus.</text>
</comment>
<reference key="1">
    <citation type="journal article" date="1993" name="Biochim. Biophys. Acta">
        <title>The atp2 operon of the green bacterium Chlorobium limicola.</title>
        <authorList>
            <person name="Xie D.L."/>
            <person name="Lill H."/>
            <person name="Hauska G."/>
            <person name="Maeda M."/>
            <person name="Futai M."/>
            <person name="Nelson N."/>
        </authorList>
    </citation>
    <scope>NUCLEOTIDE SEQUENCE [GENOMIC DNA]</scope>
</reference>
<name>PCKG_CHLLI</name>
<proteinExistence type="inferred from homology"/>
<feature type="chain" id="PRO_0000103595" description="Phosphoenolpyruvate carboxykinase [GTP]">
    <location>
        <begin position="1"/>
        <end position="618"/>
    </location>
</feature>
<feature type="active site" evidence="1">
    <location>
        <position position="271"/>
    </location>
</feature>
<feature type="binding site" evidence="1">
    <location>
        <position position="79"/>
    </location>
    <ligand>
        <name>substrate</name>
    </ligand>
</feature>
<feature type="binding site" evidence="1">
    <location>
        <begin position="218"/>
        <end position="220"/>
    </location>
    <ligand>
        <name>substrate</name>
    </ligand>
</feature>
<feature type="binding site" evidence="1">
    <location>
        <position position="227"/>
    </location>
    <ligand>
        <name>Mn(2+)</name>
        <dbReference type="ChEBI" id="CHEBI:29035"/>
    </ligand>
</feature>
<feature type="binding site" evidence="1">
    <location>
        <position position="247"/>
    </location>
    <ligand>
        <name>Mn(2+)</name>
        <dbReference type="ChEBI" id="CHEBI:29035"/>
    </ligand>
</feature>
<feature type="binding site" evidence="1">
    <location>
        <position position="269"/>
    </location>
    <ligand>
        <name>substrate</name>
    </ligand>
</feature>
<feature type="binding site" evidence="1">
    <location>
        <begin position="270"/>
        <end position="275"/>
    </location>
    <ligand>
        <name>GTP</name>
        <dbReference type="ChEBI" id="CHEBI:37565"/>
    </ligand>
</feature>
<feature type="binding site" evidence="1">
    <location>
        <position position="296"/>
    </location>
    <ligand>
        <name>Mn(2+)</name>
        <dbReference type="ChEBI" id="CHEBI:29035"/>
    </ligand>
</feature>
<feature type="binding site" evidence="1">
    <location>
        <begin position="386"/>
        <end position="388"/>
    </location>
    <ligand>
        <name>substrate</name>
    </ligand>
</feature>
<feature type="binding site" evidence="1">
    <location>
        <position position="388"/>
    </location>
    <ligand>
        <name>GTP</name>
        <dbReference type="ChEBI" id="CHEBI:37565"/>
    </ligand>
</feature>
<feature type="binding site" evidence="1">
    <location>
        <position position="419"/>
    </location>
    <ligand>
        <name>GTP</name>
        <dbReference type="ChEBI" id="CHEBI:37565"/>
    </ligand>
</feature>
<feature type="binding site" evidence="1">
    <location>
        <begin position="510"/>
        <end position="513"/>
    </location>
    <ligand>
        <name>GTP</name>
        <dbReference type="ChEBI" id="CHEBI:37565"/>
    </ligand>
</feature>
<organism>
    <name type="scientific">Chlorobium limicola</name>
    <dbReference type="NCBI Taxonomy" id="1092"/>
    <lineage>
        <taxon>Bacteria</taxon>
        <taxon>Pseudomonadati</taxon>
        <taxon>Chlorobiota</taxon>
        <taxon>Chlorobiia</taxon>
        <taxon>Chlorobiales</taxon>
        <taxon>Chlorobiaceae</taxon>
        <taxon>Chlorobium/Pelodictyon group</taxon>
        <taxon>Chlorobium</taxon>
    </lineage>
</organism>
<gene>
    <name evidence="1" type="primary">pckG</name>
    <name type="synonym">pckA</name>
</gene>